<reference key="1">
    <citation type="submission" date="2003-04" db="EMBL/GenBank/DDBJ databases">
        <title>The ATP synthase subunit 4, mitochondrial, from the human pathogenic fungus Paracoccidioides brasiliensis.</title>
        <authorList>
            <person name="Castro N.S."/>
            <person name="Lima T.A."/>
            <person name="Pereira M."/>
            <person name="Jesuino R.S.A."/>
            <person name="Felipe M.S.S."/>
            <person name="Soares C.M.A."/>
        </authorList>
    </citation>
    <scope>NUCLEOTIDE SEQUENCE [MRNA]</scope>
</reference>
<organism>
    <name type="scientific">Paracoccidioides brasiliensis</name>
    <dbReference type="NCBI Taxonomy" id="121759"/>
    <lineage>
        <taxon>Eukaryota</taxon>
        <taxon>Fungi</taxon>
        <taxon>Dikarya</taxon>
        <taxon>Ascomycota</taxon>
        <taxon>Pezizomycotina</taxon>
        <taxon>Eurotiomycetes</taxon>
        <taxon>Eurotiomycetidae</taxon>
        <taxon>Onygenales</taxon>
        <taxon>Ajellomycetaceae</taxon>
        <taxon>Paracoccidioides</taxon>
    </lineage>
</organism>
<accession>Q870C4</accession>
<feature type="transit peptide" description="Mitochondrion" evidence="1">
    <location>
        <begin position="1"/>
        <end position="36"/>
    </location>
</feature>
<feature type="chain" id="PRO_0000002522" description="ATP synthase subunit 4, mitochondrial">
    <location>
        <begin position="37"/>
        <end position="244"/>
    </location>
</feature>
<proteinExistence type="evidence at transcript level"/>
<gene>
    <name type="primary">ATP4</name>
</gene>
<sequence length="244" mass="26508">MASRLAKSAICAARVRPVLSSRTIPAAATTLTSTRSVSNVPTEDPKTKAQSIIDALPGNSLVSKTAILSAGAGLSIAAISNELYVFSEETVAAFCLLSVFAGVAKMAGPMYKEWAETQIQKQKDILNGARANHTNAVKQRIENVKQLSGVVDITKALFEVSKETARLEAQAYELEQRTALAAEAKKVLDSWVQYEGQVKVRQQRELAQTVISKVQKELENPKVIQQILQQSVTDVERIFAAKPQ</sequence>
<comment type="function">
    <text evidence="1">Mitochondrial membrane ATP synthase (F(1)F(0) ATP synthase or Complex V) produces ATP from ADP in the presence of a proton gradient across the membrane which is generated by electron transport complexes of the respiratory chain. F-type ATPases consist of two structural domains, F(1) - containing the extramembraneous catalytic core, and F(0) - containing the membrane proton channel, linked together by a central stalk and a peripheral stalk. During catalysis, ATP synthesis in the catalytic domain of F(1) is coupled via a rotary mechanism of the central stalk subunits to proton translocation. Part of the complex F(0) domain and the peripheric stalk, which acts as a stator to hold the catalytic alpha(3)beta(3) subcomplex and subunit a/ATP6 static relative to the rotary elements (By similarity).</text>
</comment>
<comment type="subunit">
    <text evidence="1">F-type ATPases have 2 components, CF(1) - the catalytic core - and CF(0) - the membrane proton channel. In yeast, the dimeric form of ATP synthase consists of 17 polypeptides: alpha, beta, gamma, delta, epsilon, 4 (B), 5 (OSCP), 6 (A), 8, 9 (C), d, E (Tim11), f, g, h, i/j and k (By similarity).</text>
</comment>
<comment type="subcellular location">
    <subcellularLocation>
        <location evidence="1">Mitochondrion</location>
    </subcellularLocation>
    <subcellularLocation>
        <location evidence="1">Mitochondrion inner membrane</location>
    </subcellularLocation>
</comment>
<comment type="similarity">
    <text evidence="2">Belongs to the eukaryotic ATPase B chain family.</text>
</comment>
<dbReference type="EMBL" id="AY271747">
    <property type="protein sequence ID" value="AAP22959.1"/>
    <property type="molecule type" value="mRNA"/>
</dbReference>
<dbReference type="SMR" id="Q870C4"/>
<dbReference type="VEuPathDB" id="FungiDB:PABG_00180"/>
<dbReference type="VEuPathDB" id="FungiDB:PADG_02578"/>
<dbReference type="GO" id="GO:0005743">
    <property type="term" value="C:mitochondrial inner membrane"/>
    <property type="evidence" value="ECO:0007669"/>
    <property type="project" value="UniProtKB-SubCell"/>
</dbReference>
<dbReference type="GO" id="GO:0045259">
    <property type="term" value="C:proton-transporting ATP synthase complex"/>
    <property type="evidence" value="ECO:0007669"/>
    <property type="project" value="UniProtKB-KW"/>
</dbReference>
<dbReference type="GO" id="GO:0046933">
    <property type="term" value="F:proton-transporting ATP synthase activity, rotational mechanism"/>
    <property type="evidence" value="ECO:0007669"/>
    <property type="project" value="TreeGrafter"/>
</dbReference>
<dbReference type="FunFam" id="1.20.5.2210:FF:000002">
    <property type="entry name" value="ATP synthase subunit 4 mitochondrial"/>
    <property type="match status" value="1"/>
</dbReference>
<dbReference type="Gene3D" id="1.20.5.2210">
    <property type="match status" value="1"/>
</dbReference>
<dbReference type="InterPro" id="IPR008688">
    <property type="entry name" value="ATP_synth_Bsub_B/MI25"/>
</dbReference>
<dbReference type="InterPro" id="IPR013837">
    <property type="entry name" value="ATP_synth_F0_suB"/>
</dbReference>
<dbReference type="PANTHER" id="PTHR12733:SF3">
    <property type="entry name" value="ATP SYNTHASE F(0) COMPLEX SUBUNIT B1, MITOCHONDRIAL"/>
    <property type="match status" value="1"/>
</dbReference>
<dbReference type="PANTHER" id="PTHR12733">
    <property type="entry name" value="MITOCHONDRIAL ATP SYNTHASE B CHAIN"/>
    <property type="match status" value="1"/>
</dbReference>
<dbReference type="Pfam" id="PF05405">
    <property type="entry name" value="Mt_ATP-synt_B"/>
    <property type="match status" value="1"/>
</dbReference>
<dbReference type="SUPFAM" id="SSF161060">
    <property type="entry name" value="ATP synthase B chain-like"/>
    <property type="match status" value="1"/>
</dbReference>
<protein>
    <recommendedName>
        <fullName>ATP synthase subunit 4, mitochondrial</fullName>
    </recommendedName>
</protein>
<keyword id="KW-0138">CF(0)</keyword>
<keyword id="KW-0375">Hydrogen ion transport</keyword>
<keyword id="KW-0406">Ion transport</keyword>
<keyword id="KW-0472">Membrane</keyword>
<keyword id="KW-0496">Mitochondrion</keyword>
<keyword id="KW-0999">Mitochondrion inner membrane</keyword>
<keyword id="KW-0809">Transit peptide</keyword>
<keyword id="KW-0813">Transport</keyword>
<evidence type="ECO:0000250" key="1"/>
<evidence type="ECO:0000305" key="2"/>
<name>ATPF_PARBR</name>